<proteinExistence type="inferred from homology"/>
<dbReference type="EMBL" id="AE005174">
    <property type="protein sequence ID" value="AAG56467.1"/>
    <property type="molecule type" value="Genomic_DNA"/>
</dbReference>
<dbReference type="EMBL" id="BA000007">
    <property type="protein sequence ID" value="BAB35337.1"/>
    <property type="molecule type" value="Genomic_DNA"/>
</dbReference>
<dbReference type="PIR" id="B90868">
    <property type="entry name" value="B90868"/>
</dbReference>
<dbReference type="PIR" id="G85750">
    <property type="entry name" value="G85750"/>
</dbReference>
<dbReference type="RefSeq" id="NP_309941.1">
    <property type="nucleotide sequence ID" value="NC_002695.1"/>
</dbReference>
<dbReference type="RefSeq" id="WP_001262123.1">
    <property type="nucleotide sequence ID" value="NZ_VOAI01000015.1"/>
</dbReference>
<dbReference type="SMR" id="P0AAC2"/>
<dbReference type="STRING" id="155864.Z2435"/>
<dbReference type="GeneID" id="912394"/>
<dbReference type="GeneID" id="93775468"/>
<dbReference type="KEGG" id="ece:Z2435"/>
<dbReference type="KEGG" id="ecs:ECs_1914"/>
<dbReference type="PATRIC" id="fig|386585.9.peg.2020"/>
<dbReference type="eggNOG" id="COG0589">
    <property type="taxonomic scope" value="Bacteria"/>
</dbReference>
<dbReference type="HOGENOM" id="CLU_049301_1_2_6"/>
<dbReference type="OMA" id="MAKYQNM"/>
<dbReference type="Proteomes" id="UP000000558">
    <property type="component" value="Chromosome"/>
</dbReference>
<dbReference type="Proteomes" id="UP000002519">
    <property type="component" value="Chromosome"/>
</dbReference>
<dbReference type="GO" id="GO:0005737">
    <property type="term" value="C:cytoplasm"/>
    <property type="evidence" value="ECO:0007669"/>
    <property type="project" value="UniProtKB-SubCell"/>
</dbReference>
<dbReference type="CDD" id="cd23943">
    <property type="entry name" value="USP-E_repeat1"/>
    <property type="match status" value="1"/>
</dbReference>
<dbReference type="CDD" id="cd23660">
    <property type="entry name" value="USP-E_repeat2"/>
    <property type="match status" value="1"/>
</dbReference>
<dbReference type="FunFam" id="3.40.50.12370:FF:000001">
    <property type="entry name" value="Universal stress protein E"/>
    <property type="match status" value="1"/>
</dbReference>
<dbReference type="Gene3D" id="3.40.50.12370">
    <property type="match status" value="1"/>
</dbReference>
<dbReference type="InterPro" id="IPR006016">
    <property type="entry name" value="UspA"/>
</dbReference>
<dbReference type="NCBIfam" id="NF008380">
    <property type="entry name" value="PRK11175.1"/>
    <property type="match status" value="1"/>
</dbReference>
<dbReference type="PANTHER" id="PTHR47892">
    <property type="entry name" value="UNIVERSAL STRESS PROTEIN E"/>
    <property type="match status" value="1"/>
</dbReference>
<dbReference type="PANTHER" id="PTHR47892:SF1">
    <property type="entry name" value="UNIVERSAL STRESS PROTEIN E"/>
    <property type="match status" value="1"/>
</dbReference>
<dbReference type="Pfam" id="PF00582">
    <property type="entry name" value="Usp"/>
    <property type="match status" value="2"/>
</dbReference>
<dbReference type="SUPFAM" id="SSF52402">
    <property type="entry name" value="Adenine nucleotide alpha hydrolases-like"/>
    <property type="match status" value="2"/>
</dbReference>
<protein>
    <recommendedName>
        <fullName>Universal stress protein E</fullName>
    </recommendedName>
</protein>
<keyword id="KW-0963">Cytoplasm</keyword>
<keyword id="KW-1185">Reference proteome</keyword>
<organism>
    <name type="scientific">Escherichia coli O157:H7</name>
    <dbReference type="NCBI Taxonomy" id="83334"/>
    <lineage>
        <taxon>Bacteria</taxon>
        <taxon>Pseudomonadati</taxon>
        <taxon>Pseudomonadota</taxon>
        <taxon>Gammaproteobacteria</taxon>
        <taxon>Enterobacterales</taxon>
        <taxon>Enterobacteriaceae</taxon>
        <taxon>Escherichia</taxon>
    </lineage>
</organism>
<feature type="initiator methionine" description="Removed" evidence="1">
    <location>
        <position position="1"/>
    </location>
</feature>
<feature type="chain" id="PRO_0000147418" description="Universal stress protein E">
    <location>
        <begin position="2"/>
        <end position="316"/>
    </location>
</feature>
<reference key="1">
    <citation type="journal article" date="2001" name="Nature">
        <title>Genome sequence of enterohaemorrhagic Escherichia coli O157:H7.</title>
        <authorList>
            <person name="Perna N.T."/>
            <person name="Plunkett G. III"/>
            <person name="Burland V."/>
            <person name="Mau B."/>
            <person name="Glasner J.D."/>
            <person name="Rose D.J."/>
            <person name="Mayhew G.F."/>
            <person name="Evans P.S."/>
            <person name="Gregor J."/>
            <person name="Kirkpatrick H.A."/>
            <person name="Posfai G."/>
            <person name="Hackett J."/>
            <person name="Klink S."/>
            <person name="Boutin A."/>
            <person name="Shao Y."/>
            <person name="Miller L."/>
            <person name="Grotbeck E.J."/>
            <person name="Davis N.W."/>
            <person name="Lim A."/>
            <person name="Dimalanta E.T."/>
            <person name="Potamousis K."/>
            <person name="Apodaca J."/>
            <person name="Anantharaman T.S."/>
            <person name="Lin J."/>
            <person name="Yen G."/>
            <person name="Schwartz D.C."/>
            <person name="Welch R.A."/>
            <person name="Blattner F.R."/>
        </authorList>
    </citation>
    <scope>NUCLEOTIDE SEQUENCE [LARGE SCALE GENOMIC DNA]</scope>
    <source>
        <strain>O157:H7 / EDL933 / ATCC 700927 / EHEC</strain>
    </source>
</reference>
<reference key="2">
    <citation type="journal article" date="2001" name="DNA Res.">
        <title>Complete genome sequence of enterohemorrhagic Escherichia coli O157:H7 and genomic comparison with a laboratory strain K-12.</title>
        <authorList>
            <person name="Hayashi T."/>
            <person name="Makino K."/>
            <person name="Ohnishi M."/>
            <person name="Kurokawa K."/>
            <person name="Ishii K."/>
            <person name="Yokoyama K."/>
            <person name="Han C.-G."/>
            <person name="Ohtsubo E."/>
            <person name="Nakayama K."/>
            <person name="Murata T."/>
            <person name="Tanaka M."/>
            <person name="Tobe T."/>
            <person name="Iida T."/>
            <person name="Takami H."/>
            <person name="Honda T."/>
            <person name="Sasakawa C."/>
            <person name="Ogasawara N."/>
            <person name="Yasunaga T."/>
            <person name="Kuhara S."/>
            <person name="Shiba T."/>
            <person name="Hattori M."/>
            <person name="Shinagawa H."/>
        </authorList>
    </citation>
    <scope>NUCLEOTIDE SEQUENCE [LARGE SCALE GENOMIC DNA]</scope>
    <source>
        <strain>O157:H7 / Sakai / RIMD 0509952 / EHEC</strain>
    </source>
</reference>
<comment type="function">
    <text evidence="1">Required for resistance to DNA-damaging agents.</text>
</comment>
<comment type="subcellular location">
    <subcellularLocation>
        <location evidence="1">Cytoplasm</location>
    </subcellularLocation>
</comment>
<comment type="similarity">
    <text evidence="2">Belongs to the universal stress protein A family.</text>
</comment>
<sequence length="316" mass="35707">MAMYQNMLVVIDPNQDDQPALRRAVYLHQRIGGKIKAFLPIYDFSYEMTTLLSPDERTAMRQGVISQRTAWIHEQAKYYLNAGVPIEIKVVWHNRPFEAIIQEVISGGHDLVLKMAHQHDRLEAVIFTPTDWHLLRKCPSPVWMVKDQPWPEGGKALVAVNLASEEPYHNALNEKLVKETIELAEQVNHTEVHLVGAYPVTPINIAIELPEFDPSVYNDAIRGQHLLAMKALRQKFGINENMTHVEKGLPEEVIPDLAEHLQAGIVVLGTVGRTGISAAFLGNTAEQVIDHLRCDLLVIKPDQYQTPVELDDEEDD</sequence>
<gene>
    <name type="primary">uspE</name>
    <name type="ordered locus">Z2435</name>
    <name type="ordered locus">ECs1914</name>
</gene>
<name>USPE_ECO57</name>
<accession>P0AAC2</accession>
<accession>P03807</accession>
<accession>P77421</accession>
<evidence type="ECO:0000250" key="1"/>
<evidence type="ECO:0000305" key="2"/>